<organism>
    <name type="scientific">Archaeoglobus fulgidus (strain ATCC 49558 / DSM 4304 / JCM 9628 / NBRC 100126 / VC-16)</name>
    <dbReference type="NCBI Taxonomy" id="224325"/>
    <lineage>
        <taxon>Archaea</taxon>
        <taxon>Methanobacteriati</taxon>
        <taxon>Methanobacteriota</taxon>
        <taxon>Archaeoglobi</taxon>
        <taxon>Archaeoglobales</taxon>
        <taxon>Archaeoglobaceae</taxon>
        <taxon>Archaeoglobus</taxon>
    </lineage>
</organism>
<gene>
    <name type="ordered locus">AF_2307</name>
</gene>
<reference key="1">
    <citation type="journal article" date="1997" name="Nature">
        <title>The complete genome sequence of the hyperthermophilic, sulphate-reducing archaeon Archaeoglobus fulgidus.</title>
        <authorList>
            <person name="Klenk H.-P."/>
            <person name="Clayton R.A."/>
            <person name="Tomb J.-F."/>
            <person name="White O."/>
            <person name="Nelson K.E."/>
            <person name="Ketchum K.A."/>
            <person name="Dodson R.J."/>
            <person name="Gwinn M.L."/>
            <person name="Hickey E.K."/>
            <person name="Peterson J.D."/>
            <person name="Richardson D.L."/>
            <person name="Kerlavage A.R."/>
            <person name="Graham D.E."/>
            <person name="Kyrpides N.C."/>
            <person name="Fleischmann R.D."/>
            <person name="Quackenbush J."/>
            <person name="Lee N.H."/>
            <person name="Sutton G.G."/>
            <person name="Gill S.R."/>
            <person name="Kirkness E.F."/>
            <person name="Dougherty B.A."/>
            <person name="McKenney K."/>
            <person name="Adams M.D."/>
            <person name="Loftus B.J."/>
            <person name="Peterson S.N."/>
            <person name="Reich C.I."/>
            <person name="McNeil L.K."/>
            <person name="Badger J.H."/>
            <person name="Glodek A."/>
            <person name="Zhou L."/>
            <person name="Overbeek R."/>
            <person name="Gocayne J.D."/>
            <person name="Weidman J.F."/>
            <person name="McDonald L.A."/>
            <person name="Utterback T.R."/>
            <person name="Cotton M.D."/>
            <person name="Spriggs T."/>
            <person name="Artiach P."/>
            <person name="Kaine B.P."/>
            <person name="Sykes S.M."/>
            <person name="Sadow P.W."/>
            <person name="D'Andrea K.P."/>
            <person name="Bowman C."/>
            <person name="Fujii C."/>
            <person name="Garland S.A."/>
            <person name="Mason T.M."/>
            <person name="Olsen G.J."/>
            <person name="Fraser C.M."/>
            <person name="Smith H.O."/>
            <person name="Woese C.R."/>
            <person name="Venter J.C."/>
        </authorList>
    </citation>
    <scope>NUCLEOTIDE SEQUENCE [LARGE SCALE GENOMIC DNA]</scope>
    <source>
        <strain>ATCC 49558 / DSM 4304 / JCM 9628 / NBRC 100126 / VC-16</strain>
    </source>
</reference>
<dbReference type="EMBL" id="AE000782">
    <property type="protein sequence ID" value="AAB88957.1"/>
    <property type="molecule type" value="Genomic_DNA"/>
</dbReference>
<dbReference type="PIR" id="C69538">
    <property type="entry name" value="C69538"/>
</dbReference>
<dbReference type="RefSeq" id="WP_010879796.1">
    <property type="nucleotide sequence ID" value="NC_000917.1"/>
</dbReference>
<dbReference type="SMR" id="O27977"/>
<dbReference type="STRING" id="224325.AF_2307"/>
<dbReference type="PaxDb" id="224325-AF_2307"/>
<dbReference type="EnsemblBacteria" id="AAB88957">
    <property type="protein sequence ID" value="AAB88957"/>
    <property type="gene ID" value="AF_2307"/>
</dbReference>
<dbReference type="KEGG" id="afu:AF_2307"/>
<dbReference type="eggNOG" id="arCOG02723">
    <property type="taxonomic scope" value="Archaea"/>
</dbReference>
<dbReference type="HOGENOM" id="CLU_056152_0_0_2"/>
<dbReference type="OrthoDB" id="359218at2157"/>
<dbReference type="Proteomes" id="UP000002199">
    <property type="component" value="Chromosome"/>
</dbReference>
<dbReference type="GO" id="GO:0004357">
    <property type="term" value="F:glutamate-cysteine ligase activity"/>
    <property type="evidence" value="ECO:0007669"/>
    <property type="project" value="InterPro"/>
</dbReference>
<dbReference type="GO" id="GO:0042398">
    <property type="term" value="P:modified amino acid biosynthetic process"/>
    <property type="evidence" value="ECO:0007669"/>
    <property type="project" value="InterPro"/>
</dbReference>
<dbReference type="Gene3D" id="3.30.590.20">
    <property type="match status" value="1"/>
</dbReference>
<dbReference type="InterPro" id="IPR050141">
    <property type="entry name" value="GCL_type2/YbdK_subfam"/>
</dbReference>
<dbReference type="InterPro" id="IPR006336">
    <property type="entry name" value="GCS2"/>
</dbReference>
<dbReference type="InterPro" id="IPR014746">
    <property type="entry name" value="Gln_synth/guanido_kin_cat_dom"/>
</dbReference>
<dbReference type="PANTHER" id="PTHR36510">
    <property type="entry name" value="GLUTAMATE--CYSTEINE LIGASE 2-RELATED"/>
    <property type="match status" value="1"/>
</dbReference>
<dbReference type="PANTHER" id="PTHR36510:SF1">
    <property type="entry name" value="GLUTAMATE--CYSTEINE LIGASE 2-RELATED"/>
    <property type="match status" value="1"/>
</dbReference>
<dbReference type="Pfam" id="PF04107">
    <property type="entry name" value="GCS2"/>
    <property type="match status" value="1"/>
</dbReference>
<dbReference type="SUPFAM" id="SSF55931">
    <property type="entry name" value="Glutamine synthetase/guanido kinase"/>
    <property type="match status" value="1"/>
</dbReference>
<feature type="chain" id="PRO_0000128135" description="Uncharacterized protein AF_2307">
    <location>
        <begin position="1"/>
        <end position="365"/>
    </location>
</feature>
<sequence>MIGPEHEFSINDENFNPVPISDEILKKIGGRTVNEAKLGRVVIGKELQKHVIELKPARPFESLSEFEETMQEGVEELLSVMDGYKLLGLGMHPLLRLEDAKVWNHRDRRIYQAYDRLFNIKQHGWLNIQSYQLNIPFSSEKEAVELHNKIRVLLPYIAAVASASPICEGKSYYVDTRLYFYRINQKEVPEICNDVIPERISSLKEYRSILNGIYEELRRKGAYVLCREWVNSRGVIVRFSRKCLEIKVMDEQECIKSDVALTAFIRAILRAELEELPVDVLIEKLNSAMRSGTEKLKPELKELLKKSKEHADEEERRYMKVVKLRIEEGSLGERILMNMPEISREEIISLCEELSRCLERNEVYL</sequence>
<accession>O27977</accession>
<name>Y2307_ARCFU</name>
<proteinExistence type="predicted"/>
<keyword id="KW-1185">Reference proteome</keyword>
<protein>
    <recommendedName>
        <fullName>Uncharacterized protein AF_2307</fullName>
    </recommendedName>
</protein>